<evidence type="ECO:0000255" key="1">
    <source>
        <dbReference type="HAMAP-Rule" id="MF_00168"/>
    </source>
</evidence>
<accession>Q887B0</accession>
<reference key="1">
    <citation type="journal article" date="2003" name="Proc. Natl. Acad. Sci. U.S.A.">
        <title>The complete genome sequence of the Arabidopsis and tomato pathogen Pseudomonas syringae pv. tomato DC3000.</title>
        <authorList>
            <person name="Buell C.R."/>
            <person name="Joardar V."/>
            <person name="Lindeberg M."/>
            <person name="Selengut J."/>
            <person name="Paulsen I.T."/>
            <person name="Gwinn M.L."/>
            <person name="Dodson R.J."/>
            <person name="DeBoy R.T."/>
            <person name="Durkin A.S."/>
            <person name="Kolonay J.F."/>
            <person name="Madupu R."/>
            <person name="Daugherty S.C."/>
            <person name="Brinkac L.M."/>
            <person name="Beanan M.J."/>
            <person name="Haft D.H."/>
            <person name="Nelson W.C."/>
            <person name="Davidsen T.M."/>
            <person name="Zafar N."/>
            <person name="Zhou L."/>
            <person name="Liu J."/>
            <person name="Yuan Q."/>
            <person name="Khouri H.M."/>
            <person name="Fedorova N.B."/>
            <person name="Tran B."/>
            <person name="Russell D."/>
            <person name="Berry K.J."/>
            <person name="Utterback T.R."/>
            <person name="Van Aken S.E."/>
            <person name="Feldblyum T.V."/>
            <person name="D'Ascenzo M."/>
            <person name="Deng W.-L."/>
            <person name="Ramos A.R."/>
            <person name="Alfano J.R."/>
            <person name="Cartinhour S."/>
            <person name="Chatterjee A.K."/>
            <person name="Delaney T.P."/>
            <person name="Lazarowitz S.G."/>
            <person name="Martin G.B."/>
            <person name="Schneider D.J."/>
            <person name="Tang X."/>
            <person name="Bender C.L."/>
            <person name="White O."/>
            <person name="Fraser C.M."/>
            <person name="Collmer A."/>
        </authorList>
    </citation>
    <scope>NUCLEOTIDE SEQUENCE [LARGE SCALE GENOMIC DNA]</scope>
    <source>
        <strain>ATCC BAA-871 / DC3000</strain>
    </source>
</reference>
<keyword id="KW-0328">Glycosyltransferase</keyword>
<keyword id="KW-0479">Metal-binding</keyword>
<keyword id="KW-0671">Queuosine biosynthesis</keyword>
<keyword id="KW-1185">Reference proteome</keyword>
<keyword id="KW-0808">Transferase</keyword>
<keyword id="KW-0819">tRNA processing</keyword>
<keyword id="KW-0862">Zinc</keyword>
<feature type="chain" id="PRO_0000135508" description="Queuine tRNA-ribosyltransferase">
    <location>
        <begin position="1"/>
        <end position="371"/>
    </location>
</feature>
<feature type="region of interest" description="RNA binding" evidence="1">
    <location>
        <begin position="243"/>
        <end position="249"/>
    </location>
</feature>
<feature type="region of interest" description="RNA binding; important for wobble base 34 recognition" evidence="1">
    <location>
        <begin position="267"/>
        <end position="271"/>
    </location>
</feature>
<feature type="active site" description="Proton acceptor" evidence="1">
    <location>
        <position position="89"/>
    </location>
</feature>
<feature type="active site" description="Nucleophile" evidence="1">
    <location>
        <position position="262"/>
    </location>
</feature>
<feature type="binding site" evidence="1">
    <location>
        <begin position="89"/>
        <end position="93"/>
    </location>
    <ligand>
        <name>substrate</name>
    </ligand>
</feature>
<feature type="binding site" evidence="1">
    <location>
        <position position="143"/>
    </location>
    <ligand>
        <name>substrate</name>
    </ligand>
</feature>
<feature type="binding site" evidence="1">
    <location>
        <position position="185"/>
    </location>
    <ligand>
        <name>substrate</name>
    </ligand>
</feature>
<feature type="binding site" evidence="1">
    <location>
        <position position="212"/>
    </location>
    <ligand>
        <name>substrate</name>
    </ligand>
</feature>
<feature type="binding site" evidence="1">
    <location>
        <position position="300"/>
    </location>
    <ligand>
        <name>Zn(2+)</name>
        <dbReference type="ChEBI" id="CHEBI:29105"/>
    </ligand>
</feature>
<feature type="binding site" evidence="1">
    <location>
        <position position="302"/>
    </location>
    <ligand>
        <name>Zn(2+)</name>
        <dbReference type="ChEBI" id="CHEBI:29105"/>
    </ligand>
</feature>
<feature type="binding site" evidence="1">
    <location>
        <position position="305"/>
    </location>
    <ligand>
        <name>Zn(2+)</name>
        <dbReference type="ChEBI" id="CHEBI:29105"/>
    </ligand>
</feature>
<feature type="binding site" evidence="1">
    <location>
        <position position="331"/>
    </location>
    <ligand>
        <name>Zn(2+)</name>
        <dbReference type="ChEBI" id="CHEBI:29105"/>
    </ligand>
</feature>
<sequence length="371" mass="40978">MSFELLATDGKARRGRLTFPRGVVETPAFMPVGTYGTVKGMLPRDIEATGAQMILGNTFHLWLRPGTEVIKGHGDLHDFMQWKGPILTDSGGFQVFSLGAMRKIKEEGVTFASPVDGAKVFMGPEESMQVQRDLGSDVVMIFDECTPYPADEDVARVSMELSLRWAKRSKVAHGENTAALFGIVQGGMHENLRKRSLEGLDEIGFDGLAIGGLSVGEPKHEMIKVLDYLPGLMPADKPRYLMGVGKPEDLVEGVRRGVDMFDCVMPTRNARNGHLFIDTGVLKIRNAFHRHDNTPLDPTCDCYTCKNFSRAYLHHLDKCGEMLGSMLNTIHNLRHYQLLMAGLREAIQQGTLAAFVDAFYAKRGLPTPPLG</sequence>
<gene>
    <name evidence="1" type="primary">tgt</name>
    <name type="ordered locus">PSPTO_1413</name>
</gene>
<dbReference type="EC" id="2.4.2.29" evidence="1"/>
<dbReference type="EMBL" id="AE016853">
    <property type="protein sequence ID" value="AAO54934.1"/>
    <property type="molecule type" value="Genomic_DNA"/>
</dbReference>
<dbReference type="RefSeq" id="NP_791239.1">
    <property type="nucleotide sequence ID" value="NC_004578.1"/>
</dbReference>
<dbReference type="RefSeq" id="WP_005736309.1">
    <property type="nucleotide sequence ID" value="NC_004578.1"/>
</dbReference>
<dbReference type="SMR" id="Q887B0"/>
<dbReference type="STRING" id="223283.PSPTO_1413"/>
<dbReference type="GeneID" id="61790094"/>
<dbReference type="KEGG" id="pst:PSPTO_1413"/>
<dbReference type="PATRIC" id="fig|223283.9.peg.1433"/>
<dbReference type="eggNOG" id="COG0343">
    <property type="taxonomic scope" value="Bacteria"/>
</dbReference>
<dbReference type="HOGENOM" id="CLU_022060_0_1_6"/>
<dbReference type="OrthoDB" id="9805417at2"/>
<dbReference type="PhylomeDB" id="Q887B0"/>
<dbReference type="UniPathway" id="UPA00392"/>
<dbReference type="Proteomes" id="UP000002515">
    <property type="component" value="Chromosome"/>
</dbReference>
<dbReference type="GO" id="GO:0005829">
    <property type="term" value="C:cytosol"/>
    <property type="evidence" value="ECO:0007669"/>
    <property type="project" value="TreeGrafter"/>
</dbReference>
<dbReference type="GO" id="GO:0046872">
    <property type="term" value="F:metal ion binding"/>
    <property type="evidence" value="ECO:0007669"/>
    <property type="project" value="UniProtKB-KW"/>
</dbReference>
<dbReference type="GO" id="GO:0008479">
    <property type="term" value="F:tRNA-guanosine(34) queuine transglycosylase activity"/>
    <property type="evidence" value="ECO:0007669"/>
    <property type="project" value="UniProtKB-UniRule"/>
</dbReference>
<dbReference type="GO" id="GO:0008616">
    <property type="term" value="P:queuosine biosynthetic process"/>
    <property type="evidence" value="ECO:0007669"/>
    <property type="project" value="UniProtKB-UniRule"/>
</dbReference>
<dbReference type="GO" id="GO:0002099">
    <property type="term" value="P:tRNA wobble guanine modification"/>
    <property type="evidence" value="ECO:0007669"/>
    <property type="project" value="TreeGrafter"/>
</dbReference>
<dbReference type="GO" id="GO:0101030">
    <property type="term" value="P:tRNA-guanine transglycosylation"/>
    <property type="evidence" value="ECO:0007669"/>
    <property type="project" value="InterPro"/>
</dbReference>
<dbReference type="FunFam" id="3.20.20.105:FF:000001">
    <property type="entry name" value="Queuine tRNA-ribosyltransferase"/>
    <property type="match status" value="1"/>
</dbReference>
<dbReference type="Gene3D" id="3.20.20.105">
    <property type="entry name" value="Queuine tRNA-ribosyltransferase-like"/>
    <property type="match status" value="1"/>
</dbReference>
<dbReference type="HAMAP" id="MF_00168">
    <property type="entry name" value="Q_tRNA_Tgt"/>
    <property type="match status" value="1"/>
</dbReference>
<dbReference type="InterPro" id="IPR050076">
    <property type="entry name" value="ArchSynthase1/Queuine_TRR"/>
</dbReference>
<dbReference type="InterPro" id="IPR004803">
    <property type="entry name" value="TGT"/>
</dbReference>
<dbReference type="InterPro" id="IPR036511">
    <property type="entry name" value="TGT-like_sf"/>
</dbReference>
<dbReference type="InterPro" id="IPR002616">
    <property type="entry name" value="tRNA_ribo_trans-like"/>
</dbReference>
<dbReference type="NCBIfam" id="TIGR00430">
    <property type="entry name" value="Q_tRNA_tgt"/>
    <property type="match status" value="1"/>
</dbReference>
<dbReference type="NCBIfam" id="TIGR00449">
    <property type="entry name" value="tgt_general"/>
    <property type="match status" value="1"/>
</dbReference>
<dbReference type="PANTHER" id="PTHR46499">
    <property type="entry name" value="QUEUINE TRNA-RIBOSYLTRANSFERASE"/>
    <property type="match status" value="1"/>
</dbReference>
<dbReference type="PANTHER" id="PTHR46499:SF1">
    <property type="entry name" value="QUEUINE TRNA-RIBOSYLTRANSFERASE"/>
    <property type="match status" value="1"/>
</dbReference>
<dbReference type="Pfam" id="PF01702">
    <property type="entry name" value="TGT"/>
    <property type="match status" value="1"/>
</dbReference>
<dbReference type="SUPFAM" id="SSF51713">
    <property type="entry name" value="tRNA-guanine transglycosylase"/>
    <property type="match status" value="1"/>
</dbReference>
<organism>
    <name type="scientific">Pseudomonas syringae pv. tomato (strain ATCC BAA-871 / DC3000)</name>
    <dbReference type="NCBI Taxonomy" id="223283"/>
    <lineage>
        <taxon>Bacteria</taxon>
        <taxon>Pseudomonadati</taxon>
        <taxon>Pseudomonadota</taxon>
        <taxon>Gammaproteobacteria</taxon>
        <taxon>Pseudomonadales</taxon>
        <taxon>Pseudomonadaceae</taxon>
        <taxon>Pseudomonas</taxon>
    </lineage>
</organism>
<protein>
    <recommendedName>
        <fullName evidence="1">Queuine tRNA-ribosyltransferase</fullName>
        <ecNumber evidence="1">2.4.2.29</ecNumber>
    </recommendedName>
    <alternativeName>
        <fullName evidence="1">Guanine insertion enzyme</fullName>
    </alternativeName>
    <alternativeName>
        <fullName evidence="1">tRNA-guanine transglycosylase</fullName>
    </alternativeName>
</protein>
<comment type="function">
    <text evidence="1">Catalyzes the base-exchange of a guanine (G) residue with the queuine precursor 7-aminomethyl-7-deazaguanine (PreQ1) at position 34 (anticodon wobble position) in tRNAs with GU(N) anticodons (tRNA-Asp, -Asn, -His and -Tyr). Catalysis occurs through a double-displacement mechanism. The nucleophile active site attacks the C1' of nucleotide 34 to detach the guanine base from the RNA, forming a covalent enzyme-RNA intermediate. The proton acceptor active site deprotonates the incoming PreQ1, allowing a nucleophilic attack on the C1' of the ribose to form the product. After dissociation, two additional enzymatic reactions on the tRNA convert PreQ1 to queuine (Q), resulting in the hypermodified nucleoside queuosine (7-(((4,5-cis-dihydroxy-2-cyclopenten-1-yl)amino)methyl)-7-deazaguanosine).</text>
</comment>
<comment type="catalytic activity">
    <reaction evidence="1">
        <text>7-aminomethyl-7-carbaguanine + guanosine(34) in tRNA = 7-aminomethyl-7-carbaguanosine(34) in tRNA + guanine</text>
        <dbReference type="Rhea" id="RHEA:24104"/>
        <dbReference type="Rhea" id="RHEA-COMP:10341"/>
        <dbReference type="Rhea" id="RHEA-COMP:10342"/>
        <dbReference type="ChEBI" id="CHEBI:16235"/>
        <dbReference type="ChEBI" id="CHEBI:58703"/>
        <dbReference type="ChEBI" id="CHEBI:74269"/>
        <dbReference type="ChEBI" id="CHEBI:82833"/>
        <dbReference type="EC" id="2.4.2.29"/>
    </reaction>
</comment>
<comment type="cofactor">
    <cofactor evidence="1">
        <name>Zn(2+)</name>
        <dbReference type="ChEBI" id="CHEBI:29105"/>
    </cofactor>
    <text evidence="1">Binds 1 zinc ion per subunit.</text>
</comment>
<comment type="pathway">
    <text evidence="1">tRNA modification; tRNA-queuosine biosynthesis.</text>
</comment>
<comment type="subunit">
    <text evidence="1">Homodimer. Within each dimer, one monomer is responsible for RNA recognition and catalysis, while the other monomer binds to the replacement base PreQ1.</text>
</comment>
<comment type="similarity">
    <text evidence="1">Belongs to the queuine tRNA-ribosyltransferase family.</text>
</comment>
<proteinExistence type="inferred from homology"/>
<name>TGT_PSESM</name>